<accession>Q0RCD6</accession>
<sequence>MTNVPTDDGPWLVVGLGNPGPGYAGNRHNAGFMVVDLLAERAGSRLKSHRSRADVAEVRLAGTRAILARPLSFMNLSGGPVSAVRTFYKIDPARVIVVHDELDIPFGSVRLKRGGGDNGHNGLRSISSALGTRDYLRVRVGIGRPPGRMDPADYVLRDFAAAERRELPLLLEHSADSVEMLITDGLEPTQNRYHALL</sequence>
<comment type="function">
    <text evidence="1">Hydrolyzes ribosome-free peptidyl-tRNAs (with 1 or more amino acids incorporated), which drop off the ribosome during protein synthesis, or as a result of ribosome stalling.</text>
</comment>
<comment type="function">
    <text evidence="1">Catalyzes the release of premature peptidyl moieties from peptidyl-tRNA molecules trapped in stalled 50S ribosomal subunits, and thus maintains levels of free tRNAs and 50S ribosomes.</text>
</comment>
<comment type="catalytic activity">
    <reaction evidence="1">
        <text>an N-acyl-L-alpha-aminoacyl-tRNA + H2O = an N-acyl-L-amino acid + a tRNA + H(+)</text>
        <dbReference type="Rhea" id="RHEA:54448"/>
        <dbReference type="Rhea" id="RHEA-COMP:10123"/>
        <dbReference type="Rhea" id="RHEA-COMP:13883"/>
        <dbReference type="ChEBI" id="CHEBI:15377"/>
        <dbReference type="ChEBI" id="CHEBI:15378"/>
        <dbReference type="ChEBI" id="CHEBI:59874"/>
        <dbReference type="ChEBI" id="CHEBI:78442"/>
        <dbReference type="ChEBI" id="CHEBI:138191"/>
        <dbReference type="EC" id="3.1.1.29"/>
    </reaction>
</comment>
<comment type="subunit">
    <text evidence="1">Monomer.</text>
</comment>
<comment type="subcellular location">
    <subcellularLocation>
        <location evidence="1">Cytoplasm</location>
    </subcellularLocation>
</comment>
<comment type="similarity">
    <text evidence="1">Belongs to the PTH family.</text>
</comment>
<name>PTH_FRAAA</name>
<evidence type="ECO:0000255" key="1">
    <source>
        <dbReference type="HAMAP-Rule" id="MF_00083"/>
    </source>
</evidence>
<dbReference type="EC" id="3.1.1.29" evidence="1"/>
<dbReference type="EMBL" id="CT573213">
    <property type="protein sequence ID" value="CAJ64889.1"/>
    <property type="molecule type" value="Genomic_DNA"/>
</dbReference>
<dbReference type="RefSeq" id="WP_011607316.1">
    <property type="nucleotide sequence ID" value="NC_008278.1"/>
</dbReference>
<dbReference type="SMR" id="Q0RCD6"/>
<dbReference type="STRING" id="326424.FRAAL6266"/>
<dbReference type="KEGG" id="fal:FRAAL6266"/>
<dbReference type="eggNOG" id="COG0193">
    <property type="taxonomic scope" value="Bacteria"/>
</dbReference>
<dbReference type="HOGENOM" id="CLU_062456_2_2_11"/>
<dbReference type="OrthoDB" id="9800507at2"/>
<dbReference type="Proteomes" id="UP000000657">
    <property type="component" value="Chromosome"/>
</dbReference>
<dbReference type="GO" id="GO:0005737">
    <property type="term" value="C:cytoplasm"/>
    <property type="evidence" value="ECO:0007669"/>
    <property type="project" value="UniProtKB-SubCell"/>
</dbReference>
<dbReference type="GO" id="GO:0004045">
    <property type="term" value="F:peptidyl-tRNA hydrolase activity"/>
    <property type="evidence" value="ECO:0007669"/>
    <property type="project" value="UniProtKB-UniRule"/>
</dbReference>
<dbReference type="GO" id="GO:0000049">
    <property type="term" value="F:tRNA binding"/>
    <property type="evidence" value="ECO:0007669"/>
    <property type="project" value="UniProtKB-UniRule"/>
</dbReference>
<dbReference type="GO" id="GO:0006515">
    <property type="term" value="P:protein quality control for misfolded or incompletely synthesized proteins"/>
    <property type="evidence" value="ECO:0007669"/>
    <property type="project" value="UniProtKB-UniRule"/>
</dbReference>
<dbReference type="GO" id="GO:0072344">
    <property type="term" value="P:rescue of stalled ribosome"/>
    <property type="evidence" value="ECO:0007669"/>
    <property type="project" value="UniProtKB-UniRule"/>
</dbReference>
<dbReference type="CDD" id="cd00462">
    <property type="entry name" value="PTH"/>
    <property type="match status" value="1"/>
</dbReference>
<dbReference type="FunFam" id="3.40.50.1470:FF:000001">
    <property type="entry name" value="Peptidyl-tRNA hydrolase"/>
    <property type="match status" value="1"/>
</dbReference>
<dbReference type="Gene3D" id="3.40.50.1470">
    <property type="entry name" value="Peptidyl-tRNA hydrolase"/>
    <property type="match status" value="1"/>
</dbReference>
<dbReference type="HAMAP" id="MF_00083">
    <property type="entry name" value="Pept_tRNA_hydro_bact"/>
    <property type="match status" value="1"/>
</dbReference>
<dbReference type="InterPro" id="IPR001328">
    <property type="entry name" value="Pept_tRNA_hydro"/>
</dbReference>
<dbReference type="InterPro" id="IPR018171">
    <property type="entry name" value="Pept_tRNA_hydro_CS"/>
</dbReference>
<dbReference type="InterPro" id="IPR036416">
    <property type="entry name" value="Pept_tRNA_hydro_sf"/>
</dbReference>
<dbReference type="NCBIfam" id="TIGR00447">
    <property type="entry name" value="pth"/>
    <property type="match status" value="1"/>
</dbReference>
<dbReference type="PANTHER" id="PTHR17224">
    <property type="entry name" value="PEPTIDYL-TRNA HYDROLASE"/>
    <property type="match status" value="1"/>
</dbReference>
<dbReference type="PANTHER" id="PTHR17224:SF1">
    <property type="entry name" value="PEPTIDYL-TRNA HYDROLASE"/>
    <property type="match status" value="1"/>
</dbReference>
<dbReference type="Pfam" id="PF01195">
    <property type="entry name" value="Pept_tRNA_hydro"/>
    <property type="match status" value="1"/>
</dbReference>
<dbReference type="SUPFAM" id="SSF53178">
    <property type="entry name" value="Peptidyl-tRNA hydrolase-like"/>
    <property type="match status" value="1"/>
</dbReference>
<dbReference type="PROSITE" id="PS01195">
    <property type="entry name" value="PEPT_TRNA_HYDROL_1"/>
    <property type="match status" value="1"/>
</dbReference>
<dbReference type="PROSITE" id="PS01196">
    <property type="entry name" value="PEPT_TRNA_HYDROL_2"/>
    <property type="match status" value="1"/>
</dbReference>
<organism>
    <name type="scientific">Frankia alni (strain DSM 45986 / CECT 9034 / ACN14a)</name>
    <dbReference type="NCBI Taxonomy" id="326424"/>
    <lineage>
        <taxon>Bacteria</taxon>
        <taxon>Bacillati</taxon>
        <taxon>Actinomycetota</taxon>
        <taxon>Actinomycetes</taxon>
        <taxon>Frankiales</taxon>
        <taxon>Frankiaceae</taxon>
        <taxon>Frankia</taxon>
    </lineage>
</organism>
<proteinExistence type="inferred from homology"/>
<reference key="1">
    <citation type="journal article" date="2007" name="Genome Res.">
        <title>Genome characteristics of facultatively symbiotic Frankia sp. strains reflect host range and host plant biogeography.</title>
        <authorList>
            <person name="Normand P."/>
            <person name="Lapierre P."/>
            <person name="Tisa L.S."/>
            <person name="Gogarten J.P."/>
            <person name="Alloisio N."/>
            <person name="Bagnarol E."/>
            <person name="Bassi C.A."/>
            <person name="Berry A.M."/>
            <person name="Bickhart D.M."/>
            <person name="Choisne N."/>
            <person name="Couloux A."/>
            <person name="Cournoyer B."/>
            <person name="Cruveiller S."/>
            <person name="Daubin V."/>
            <person name="Demange N."/>
            <person name="Francino M.P."/>
            <person name="Goltsman E."/>
            <person name="Huang Y."/>
            <person name="Kopp O.R."/>
            <person name="Labarre L."/>
            <person name="Lapidus A."/>
            <person name="Lavire C."/>
            <person name="Marechal J."/>
            <person name="Martinez M."/>
            <person name="Mastronunzio J.E."/>
            <person name="Mullin B.C."/>
            <person name="Niemann J."/>
            <person name="Pujic P."/>
            <person name="Rawnsley T."/>
            <person name="Rouy Z."/>
            <person name="Schenowitz C."/>
            <person name="Sellstedt A."/>
            <person name="Tavares F."/>
            <person name="Tomkins J.P."/>
            <person name="Vallenet D."/>
            <person name="Valverde C."/>
            <person name="Wall L.G."/>
            <person name="Wang Y."/>
            <person name="Medigue C."/>
            <person name="Benson D.R."/>
        </authorList>
    </citation>
    <scope>NUCLEOTIDE SEQUENCE [LARGE SCALE GENOMIC DNA]</scope>
    <source>
        <strain>DSM 45986 / CECT 9034 / ACN14a</strain>
    </source>
</reference>
<keyword id="KW-0963">Cytoplasm</keyword>
<keyword id="KW-0378">Hydrolase</keyword>
<keyword id="KW-1185">Reference proteome</keyword>
<keyword id="KW-0694">RNA-binding</keyword>
<keyword id="KW-0820">tRNA-binding</keyword>
<feature type="chain" id="PRO_1000010590" description="Peptidyl-tRNA hydrolase">
    <location>
        <begin position="1"/>
        <end position="197"/>
    </location>
</feature>
<feature type="active site" description="Proton acceptor" evidence="1">
    <location>
        <position position="28"/>
    </location>
</feature>
<feature type="binding site" evidence="1">
    <location>
        <position position="23"/>
    </location>
    <ligand>
        <name>tRNA</name>
        <dbReference type="ChEBI" id="CHEBI:17843"/>
    </ligand>
</feature>
<feature type="binding site" evidence="1">
    <location>
        <position position="73"/>
    </location>
    <ligand>
        <name>tRNA</name>
        <dbReference type="ChEBI" id="CHEBI:17843"/>
    </ligand>
</feature>
<feature type="binding site" evidence="1">
    <location>
        <position position="75"/>
    </location>
    <ligand>
        <name>tRNA</name>
        <dbReference type="ChEBI" id="CHEBI:17843"/>
    </ligand>
</feature>
<feature type="binding site" evidence="1">
    <location>
        <position position="121"/>
    </location>
    <ligand>
        <name>tRNA</name>
        <dbReference type="ChEBI" id="CHEBI:17843"/>
    </ligand>
</feature>
<feature type="site" description="Discriminates between blocked and unblocked aminoacyl-tRNA" evidence="1">
    <location>
        <position position="18"/>
    </location>
</feature>
<feature type="site" description="Stabilizes the basic form of H active site to accept a proton" evidence="1">
    <location>
        <position position="100"/>
    </location>
</feature>
<gene>
    <name evidence="1" type="primary">pth</name>
    <name type="ordered locus">FRAAL6266</name>
</gene>
<protein>
    <recommendedName>
        <fullName evidence="1">Peptidyl-tRNA hydrolase</fullName>
        <shortName evidence="1">Pth</shortName>
        <ecNumber evidence="1">3.1.1.29</ecNumber>
    </recommendedName>
</protein>